<accession>A8H415</accession>
<organism>
    <name type="scientific">Shewanella pealeana (strain ATCC 700345 / ANG-SQ1)</name>
    <dbReference type="NCBI Taxonomy" id="398579"/>
    <lineage>
        <taxon>Bacteria</taxon>
        <taxon>Pseudomonadati</taxon>
        <taxon>Pseudomonadota</taxon>
        <taxon>Gammaproteobacteria</taxon>
        <taxon>Alteromonadales</taxon>
        <taxon>Shewanellaceae</taxon>
        <taxon>Shewanella</taxon>
    </lineage>
</organism>
<sequence>MIYGSIVALVTPMNSDGTVDYKSLESLVEYHIAQGTDAIVAVGTTGESATLPAKEHIAVVEQTVKFAAGRIPIIGGNGANATAEAVELTKGLSNVGVAAMLGVTPYYNKPTPKGLIAHYTAVAASTDVPQILYNVPGRTAVDMRPETVAQLVGIKNIIGVKEATGDLSRVKELRNLCGDDFLLYSGDDATAREFLSLGGNGVISVANNIVPKQFKAMCDAALSGDVSAALSAEESIKELFSVLFCEANPIPVKWAVHRMGLISNGTIRLPLTELSTEFHGLLLEAMKNARIEVK</sequence>
<reference key="1">
    <citation type="submission" date="2007-10" db="EMBL/GenBank/DDBJ databases">
        <title>Complete sequence of Shewanella pealeana ATCC 700345.</title>
        <authorList>
            <consortium name="US DOE Joint Genome Institute"/>
            <person name="Copeland A."/>
            <person name="Lucas S."/>
            <person name="Lapidus A."/>
            <person name="Barry K."/>
            <person name="Glavina del Rio T."/>
            <person name="Dalin E."/>
            <person name="Tice H."/>
            <person name="Pitluck S."/>
            <person name="Chertkov O."/>
            <person name="Brettin T."/>
            <person name="Bruce D."/>
            <person name="Detter J.C."/>
            <person name="Han C."/>
            <person name="Schmutz J."/>
            <person name="Larimer F."/>
            <person name="Land M."/>
            <person name="Hauser L."/>
            <person name="Kyrpides N."/>
            <person name="Kim E."/>
            <person name="Zhao J.-S.Z."/>
            <person name="Manno D."/>
            <person name="Hawari J."/>
            <person name="Richardson P."/>
        </authorList>
    </citation>
    <scope>NUCLEOTIDE SEQUENCE [LARGE SCALE GENOMIC DNA]</scope>
    <source>
        <strain>ATCC 700345 / ANG-SQ1</strain>
    </source>
</reference>
<name>DAPA_SHEPA</name>
<gene>
    <name evidence="1" type="primary">dapA</name>
    <name type="ordered locus">Spea_1980</name>
</gene>
<keyword id="KW-0028">Amino-acid biosynthesis</keyword>
<keyword id="KW-0963">Cytoplasm</keyword>
<keyword id="KW-0220">Diaminopimelate biosynthesis</keyword>
<keyword id="KW-0456">Lyase</keyword>
<keyword id="KW-0457">Lysine biosynthesis</keyword>
<keyword id="KW-1185">Reference proteome</keyword>
<keyword id="KW-0704">Schiff base</keyword>
<feature type="chain" id="PRO_1000080539" description="4-hydroxy-tetrahydrodipicolinate synthase">
    <location>
        <begin position="1"/>
        <end position="294"/>
    </location>
</feature>
<feature type="active site" description="Proton donor/acceptor" evidence="1">
    <location>
        <position position="133"/>
    </location>
</feature>
<feature type="active site" description="Schiff-base intermediate with substrate" evidence="1">
    <location>
        <position position="161"/>
    </location>
</feature>
<feature type="binding site" evidence="1">
    <location>
        <position position="45"/>
    </location>
    <ligand>
        <name>pyruvate</name>
        <dbReference type="ChEBI" id="CHEBI:15361"/>
    </ligand>
</feature>
<feature type="binding site" evidence="1">
    <location>
        <position position="203"/>
    </location>
    <ligand>
        <name>pyruvate</name>
        <dbReference type="ChEBI" id="CHEBI:15361"/>
    </ligand>
</feature>
<feature type="site" description="Part of a proton relay during catalysis" evidence="1">
    <location>
        <position position="44"/>
    </location>
</feature>
<feature type="site" description="Part of a proton relay during catalysis" evidence="1">
    <location>
        <position position="107"/>
    </location>
</feature>
<proteinExistence type="inferred from homology"/>
<dbReference type="EC" id="4.3.3.7" evidence="1"/>
<dbReference type="EMBL" id="CP000851">
    <property type="protein sequence ID" value="ABV87302.1"/>
    <property type="molecule type" value="Genomic_DNA"/>
</dbReference>
<dbReference type="RefSeq" id="WP_012155218.1">
    <property type="nucleotide sequence ID" value="NC_009901.1"/>
</dbReference>
<dbReference type="SMR" id="A8H415"/>
<dbReference type="STRING" id="398579.Spea_1980"/>
<dbReference type="KEGG" id="spl:Spea_1980"/>
<dbReference type="eggNOG" id="COG0329">
    <property type="taxonomic scope" value="Bacteria"/>
</dbReference>
<dbReference type="HOGENOM" id="CLU_049343_7_1_6"/>
<dbReference type="OrthoDB" id="9782828at2"/>
<dbReference type="UniPathway" id="UPA00034">
    <property type="reaction ID" value="UER00017"/>
</dbReference>
<dbReference type="Proteomes" id="UP000002608">
    <property type="component" value="Chromosome"/>
</dbReference>
<dbReference type="GO" id="GO:0005829">
    <property type="term" value="C:cytosol"/>
    <property type="evidence" value="ECO:0007669"/>
    <property type="project" value="TreeGrafter"/>
</dbReference>
<dbReference type="GO" id="GO:0008840">
    <property type="term" value="F:4-hydroxy-tetrahydrodipicolinate synthase activity"/>
    <property type="evidence" value="ECO:0007669"/>
    <property type="project" value="UniProtKB-UniRule"/>
</dbReference>
<dbReference type="GO" id="GO:0019877">
    <property type="term" value="P:diaminopimelate biosynthetic process"/>
    <property type="evidence" value="ECO:0007669"/>
    <property type="project" value="UniProtKB-UniRule"/>
</dbReference>
<dbReference type="GO" id="GO:0009089">
    <property type="term" value="P:lysine biosynthetic process via diaminopimelate"/>
    <property type="evidence" value="ECO:0007669"/>
    <property type="project" value="UniProtKB-UniRule"/>
</dbReference>
<dbReference type="CDD" id="cd00950">
    <property type="entry name" value="DHDPS"/>
    <property type="match status" value="1"/>
</dbReference>
<dbReference type="Gene3D" id="3.20.20.70">
    <property type="entry name" value="Aldolase class I"/>
    <property type="match status" value="1"/>
</dbReference>
<dbReference type="HAMAP" id="MF_00418">
    <property type="entry name" value="DapA"/>
    <property type="match status" value="1"/>
</dbReference>
<dbReference type="InterPro" id="IPR013785">
    <property type="entry name" value="Aldolase_TIM"/>
</dbReference>
<dbReference type="InterPro" id="IPR005263">
    <property type="entry name" value="DapA"/>
</dbReference>
<dbReference type="InterPro" id="IPR002220">
    <property type="entry name" value="DapA-like"/>
</dbReference>
<dbReference type="InterPro" id="IPR020625">
    <property type="entry name" value="Schiff_base-form_aldolases_AS"/>
</dbReference>
<dbReference type="InterPro" id="IPR020624">
    <property type="entry name" value="Schiff_base-form_aldolases_CS"/>
</dbReference>
<dbReference type="NCBIfam" id="TIGR00674">
    <property type="entry name" value="dapA"/>
    <property type="match status" value="1"/>
</dbReference>
<dbReference type="PANTHER" id="PTHR12128:SF66">
    <property type="entry name" value="4-HYDROXY-2-OXOGLUTARATE ALDOLASE, MITOCHONDRIAL"/>
    <property type="match status" value="1"/>
</dbReference>
<dbReference type="PANTHER" id="PTHR12128">
    <property type="entry name" value="DIHYDRODIPICOLINATE SYNTHASE"/>
    <property type="match status" value="1"/>
</dbReference>
<dbReference type="Pfam" id="PF00701">
    <property type="entry name" value="DHDPS"/>
    <property type="match status" value="1"/>
</dbReference>
<dbReference type="PIRSF" id="PIRSF001365">
    <property type="entry name" value="DHDPS"/>
    <property type="match status" value="1"/>
</dbReference>
<dbReference type="PRINTS" id="PR00146">
    <property type="entry name" value="DHPICSNTHASE"/>
</dbReference>
<dbReference type="SMART" id="SM01130">
    <property type="entry name" value="DHDPS"/>
    <property type="match status" value="1"/>
</dbReference>
<dbReference type="SUPFAM" id="SSF51569">
    <property type="entry name" value="Aldolase"/>
    <property type="match status" value="1"/>
</dbReference>
<dbReference type="PROSITE" id="PS00665">
    <property type="entry name" value="DHDPS_1"/>
    <property type="match status" value="1"/>
</dbReference>
<dbReference type="PROSITE" id="PS00666">
    <property type="entry name" value="DHDPS_2"/>
    <property type="match status" value="1"/>
</dbReference>
<protein>
    <recommendedName>
        <fullName evidence="1">4-hydroxy-tetrahydrodipicolinate synthase</fullName>
        <shortName evidence="1">HTPA synthase</shortName>
        <ecNumber evidence="1">4.3.3.7</ecNumber>
    </recommendedName>
</protein>
<comment type="function">
    <text evidence="1">Catalyzes the condensation of (S)-aspartate-beta-semialdehyde [(S)-ASA] and pyruvate to 4-hydroxy-tetrahydrodipicolinate (HTPA).</text>
</comment>
<comment type="catalytic activity">
    <reaction evidence="1">
        <text>L-aspartate 4-semialdehyde + pyruvate = (2S,4S)-4-hydroxy-2,3,4,5-tetrahydrodipicolinate + H2O + H(+)</text>
        <dbReference type="Rhea" id="RHEA:34171"/>
        <dbReference type="ChEBI" id="CHEBI:15361"/>
        <dbReference type="ChEBI" id="CHEBI:15377"/>
        <dbReference type="ChEBI" id="CHEBI:15378"/>
        <dbReference type="ChEBI" id="CHEBI:67139"/>
        <dbReference type="ChEBI" id="CHEBI:537519"/>
        <dbReference type="EC" id="4.3.3.7"/>
    </reaction>
</comment>
<comment type="pathway">
    <text evidence="1">Amino-acid biosynthesis; L-lysine biosynthesis via DAP pathway; (S)-tetrahydrodipicolinate from L-aspartate: step 3/4.</text>
</comment>
<comment type="subunit">
    <text evidence="1">Homotetramer; dimer of dimers.</text>
</comment>
<comment type="subcellular location">
    <subcellularLocation>
        <location evidence="1">Cytoplasm</location>
    </subcellularLocation>
</comment>
<comment type="similarity">
    <text evidence="1">Belongs to the DapA family.</text>
</comment>
<comment type="caution">
    <text evidence="2">Was originally thought to be a dihydrodipicolinate synthase (DHDPS), catalyzing the condensation of (S)-aspartate-beta-semialdehyde [(S)-ASA] and pyruvate to dihydrodipicolinate (DHDP). However, it was shown in E.coli that the product of the enzymatic reaction is not dihydrodipicolinate but in fact (4S)-4-hydroxy-2,3,4,5-tetrahydro-(2S)-dipicolinic acid (HTPA), and that the consecutive dehydration reaction leading to DHDP is not spontaneous but catalyzed by DapB.</text>
</comment>
<evidence type="ECO:0000255" key="1">
    <source>
        <dbReference type="HAMAP-Rule" id="MF_00418"/>
    </source>
</evidence>
<evidence type="ECO:0000305" key="2"/>